<reference key="1">
    <citation type="journal article" date="2003" name="Proc. Natl. Acad. Sci. U.S.A.">
        <title>Reductive genome evolution in Buchnera aphidicola.</title>
        <authorList>
            <person name="van Ham R.C.H.J."/>
            <person name="Kamerbeek J."/>
            <person name="Palacios C."/>
            <person name="Rausell C."/>
            <person name="Abascal F."/>
            <person name="Bastolla U."/>
            <person name="Fernandez J.M."/>
            <person name="Jimenez L."/>
            <person name="Postigo M."/>
            <person name="Silva F.J."/>
            <person name="Tamames J."/>
            <person name="Viguera E."/>
            <person name="Latorre A."/>
            <person name="Valencia A."/>
            <person name="Moran F."/>
            <person name="Moya A."/>
        </authorList>
    </citation>
    <scope>NUCLEOTIDE SEQUENCE [LARGE SCALE GENOMIC DNA]</scope>
    <source>
        <strain>Bp</strain>
    </source>
</reference>
<comment type="function">
    <text evidence="1">The main replicative DNA helicase, it participates in initiation and elongation during chromosome replication. Travels ahead of the DNA replisome, separating dsDNA into templates for DNA synthesis. A processive ATP-dependent 5'-3' DNA helicase it has DNA-dependent ATPase activity.</text>
</comment>
<comment type="catalytic activity">
    <reaction evidence="1">
        <text>Couples ATP hydrolysis with the unwinding of duplex DNA at the replication fork by translocating in the 5'-3' direction. This creates two antiparallel DNA single strands (ssDNA). The leading ssDNA polymer is the template for DNA polymerase III holoenzyme which synthesizes a continuous strand.</text>
        <dbReference type="EC" id="5.6.2.3"/>
    </reaction>
</comment>
<comment type="catalytic activity">
    <reaction evidence="1">
        <text>ATP + H2O = ADP + phosphate + H(+)</text>
        <dbReference type="Rhea" id="RHEA:13065"/>
        <dbReference type="ChEBI" id="CHEBI:15377"/>
        <dbReference type="ChEBI" id="CHEBI:15378"/>
        <dbReference type="ChEBI" id="CHEBI:30616"/>
        <dbReference type="ChEBI" id="CHEBI:43474"/>
        <dbReference type="ChEBI" id="CHEBI:456216"/>
        <dbReference type="EC" id="5.6.2.3"/>
    </reaction>
</comment>
<comment type="subunit">
    <text evidence="1">Homohexamer.</text>
</comment>
<comment type="similarity">
    <text evidence="3">Belongs to the helicase family. DnaB subfamily.</text>
</comment>
<protein>
    <recommendedName>
        <fullName>Replicative DNA helicase DnaB</fullName>
        <ecNumber evidence="1">5.6.2.3</ecNumber>
    </recommendedName>
    <alternativeName>
        <fullName evidence="3">DNA 5'-3' helicase DnaB</fullName>
    </alternativeName>
</protein>
<sequence length="463" mass="52984">MKNVKKKNLDNQVEKLIELPNSLEAEQSILGGLMLDNEQWDYISEKISENDFFSLSHQLIFREMKYLLNKGYPIDLITLSESLEQKGKLEYIGRFAYLAELSKNVPSTANITTYADIVRERSMVRKIIKIANKIIQAGYDPRGKTSQELLNLAESKILSISEQNFQKNSGPKNIEELLDITLANIEKLFNTPYKGITGINTGYQDLNNKTSGLQPSDLIIIAARPSMGKTTFAMNICENIAMTYKKPVLIFSLEMSGEQIMMRMLSSLSRVNQEKLRTGQLNDEDWARISSTINILLKKKNMYIDDSSTLTPSEMRSRSRKIYRENNGLSLIMVDYLQLIKVPSLIGNRTLEIAEISRMLKSLAKELKIPIIALSQLNRSLEQRRDKRPINSDLRESGSLEQDADLIMFIYRDELYHEHTDLKGIAEIIIGKQRNGPIGTIKLTFNGHWSRFDNYSESKYSDE</sequence>
<name>DNAB_BUCBP</name>
<accession>Q89A52</accession>
<feature type="chain" id="PRO_0000102018" description="Replicative DNA helicase DnaB">
    <location>
        <begin position="1"/>
        <end position="463"/>
    </location>
</feature>
<feature type="domain" description="SF4 helicase" evidence="2">
    <location>
        <begin position="192"/>
        <end position="459"/>
    </location>
</feature>
<feature type="binding site" evidence="2">
    <location>
        <begin position="223"/>
        <end position="230"/>
    </location>
    <ligand>
        <name>ATP</name>
        <dbReference type="ChEBI" id="CHEBI:30616"/>
    </ligand>
</feature>
<keyword id="KW-0067">ATP-binding</keyword>
<keyword id="KW-0235">DNA replication</keyword>
<keyword id="KW-0238">DNA-binding</keyword>
<keyword id="KW-0347">Helicase</keyword>
<keyword id="KW-0378">Hydrolase</keyword>
<keyword id="KW-0413">Isomerase</keyword>
<keyword id="KW-0547">Nucleotide-binding</keyword>
<keyword id="KW-0639">Primosome</keyword>
<keyword id="KW-1185">Reference proteome</keyword>
<evidence type="ECO:0000250" key="1">
    <source>
        <dbReference type="UniProtKB" id="P0ACB0"/>
    </source>
</evidence>
<evidence type="ECO:0000255" key="2">
    <source>
        <dbReference type="PROSITE-ProRule" id="PRU00596"/>
    </source>
</evidence>
<evidence type="ECO:0000305" key="3"/>
<gene>
    <name type="primary">dnaB</name>
    <name type="ordered locus">bbp_489</name>
</gene>
<organism>
    <name type="scientific">Buchnera aphidicola subsp. Baizongia pistaciae (strain Bp)</name>
    <dbReference type="NCBI Taxonomy" id="224915"/>
    <lineage>
        <taxon>Bacteria</taxon>
        <taxon>Pseudomonadati</taxon>
        <taxon>Pseudomonadota</taxon>
        <taxon>Gammaproteobacteria</taxon>
        <taxon>Enterobacterales</taxon>
        <taxon>Erwiniaceae</taxon>
        <taxon>Buchnera</taxon>
    </lineage>
</organism>
<dbReference type="EC" id="5.6.2.3" evidence="1"/>
<dbReference type="EMBL" id="AE016826">
    <property type="protein sequence ID" value="AAO27194.1"/>
    <property type="molecule type" value="Genomic_DNA"/>
</dbReference>
<dbReference type="SMR" id="Q89A52"/>
<dbReference type="STRING" id="224915.bbp_489"/>
<dbReference type="KEGG" id="bab:bbp_489"/>
<dbReference type="eggNOG" id="COG0305">
    <property type="taxonomic scope" value="Bacteria"/>
</dbReference>
<dbReference type="HOGENOM" id="CLU_005373_0_3_6"/>
<dbReference type="Proteomes" id="UP000000601">
    <property type="component" value="Chromosome"/>
</dbReference>
<dbReference type="GO" id="GO:0005829">
    <property type="term" value="C:cytosol"/>
    <property type="evidence" value="ECO:0007669"/>
    <property type="project" value="TreeGrafter"/>
</dbReference>
<dbReference type="GO" id="GO:1990077">
    <property type="term" value="C:primosome complex"/>
    <property type="evidence" value="ECO:0007669"/>
    <property type="project" value="UniProtKB-KW"/>
</dbReference>
<dbReference type="GO" id="GO:0005524">
    <property type="term" value="F:ATP binding"/>
    <property type="evidence" value="ECO:0007669"/>
    <property type="project" value="UniProtKB-KW"/>
</dbReference>
<dbReference type="GO" id="GO:0016887">
    <property type="term" value="F:ATP hydrolysis activity"/>
    <property type="evidence" value="ECO:0007669"/>
    <property type="project" value="RHEA"/>
</dbReference>
<dbReference type="GO" id="GO:0003677">
    <property type="term" value="F:DNA binding"/>
    <property type="evidence" value="ECO:0007669"/>
    <property type="project" value="UniProtKB-KW"/>
</dbReference>
<dbReference type="GO" id="GO:0003678">
    <property type="term" value="F:DNA helicase activity"/>
    <property type="evidence" value="ECO:0007669"/>
    <property type="project" value="InterPro"/>
</dbReference>
<dbReference type="GO" id="GO:0006269">
    <property type="term" value="P:DNA replication, synthesis of primer"/>
    <property type="evidence" value="ECO:0007669"/>
    <property type="project" value="UniProtKB-KW"/>
</dbReference>
<dbReference type="CDD" id="cd00984">
    <property type="entry name" value="DnaB_C"/>
    <property type="match status" value="1"/>
</dbReference>
<dbReference type="FunFam" id="1.10.860.10:FF:000001">
    <property type="entry name" value="Replicative DNA helicase"/>
    <property type="match status" value="1"/>
</dbReference>
<dbReference type="FunFam" id="3.40.50.300:FF:000076">
    <property type="entry name" value="Replicative DNA helicase"/>
    <property type="match status" value="1"/>
</dbReference>
<dbReference type="Gene3D" id="1.10.860.10">
    <property type="entry name" value="DNAb Helicase, Chain A"/>
    <property type="match status" value="1"/>
</dbReference>
<dbReference type="Gene3D" id="3.40.50.300">
    <property type="entry name" value="P-loop containing nucleotide triphosphate hydrolases"/>
    <property type="match status" value="1"/>
</dbReference>
<dbReference type="InterPro" id="IPR036185">
    <property type="entry name" value="DNA_heli_DnaB-like_N_sf"/>
</dbReference>
<dbReference type="InterPro" id="IPR007692">
    <property type="entry name" value="DNA_helicase_DnaB"/>
</dbReference>
<dbReference type="InterPro" id="IPR007694">
    <property type="entry name" value="DNA_helicase_DnaB-like_C"/>
</dbReference>
<dbReference type="InterPro" id="IPR007693">
    <property type="entry name" value="DNA_helicase_DnaB-like_N"/>
</dbReference>
<dbReference type="InterPro" id="IPR016136">
    <property type="entry name" value="DNA_helicase_N/primase_C"/>
</dbReference>
<dbReference type="InterPro" id="IPR027417">
    <property type="entry name" value="P-loop_NTPase"/>
</dbReference>
<dbReference type="NCBIfam" id="TIGR00665">
    <property type="entry name" value="DnaB"/>
    <property type="match status" value="1"/>
</dbReference>
<dbReference type="NCBIfam" id="NF004384">
    <property type="entry name" value="PRK05748.1"/>
    <property type="match status" value="1"/>
</dbReference>
<dbReference type="PANTHER" id="PTHR30153:SF2">
    <property type="entry name" value="REPLICATIVE DNA HELICASE"/>
    <property type="match status" value="1"/>
</dbReference>
<dbReference type="PANTHER" id="PTHR30153">
    <property type="entry name" value="REPLICATIVE DNA HELICASE DNAB"/>
    <property type="match status" value="1"/>
</dbReference>
<dbReference type="Pfam" id="PF00772">
    <property type="entry name" value="DnaB"/>
    <property type="match status" value="1"/>
</dbReference>
<dbReference type="Pfam" id="PF03796">
    <property type="entry name" value="DnaB_C"/>
    <property type="match status" value="1"/>
</dbReference>
<dbReference type="SUPFAM" id="SSF48024">
    <property type="entry name" value="N-terminal domain of DnaB helicase"/>
    <property type="match status" value="1"/>
</dbReference>
<dbReference type="SUPFAM" id="SSF52540">
    <property type="entry name" value="P-loop containing nucleoside triphosphate hydrolases"/>
    <property type="match status" value="1"/>
</dbReference>
<dbReference type="PROSITE" id="PS51199">
    <property type="entry name" value="SF4_HELICASE"/>
    <property type="match status" value="1"/>
</dbReference>
<proteinExistence type="inferred from homology"/>